<gene>
    <name type="primary">FSHR</name>
</gene>
<feature type="signal peptide" evidence="3">
    <location>
        <begin position="1"/>
        <end position="17"/>
    </location>
</feature>
<feature type="chain" id="PRO_0000233343" description="Follicle-stimulating hormone receptor">
    <location>
        <begin position="18"/>
        <end position="694"/>
    </location>
</feature>
<feature type="topological domain" description="Extracellular" evidence="3">
    <location>
        <begin position="18"/>
        <end position="367"/>
    </location>
</feature>
<feature type="transmembrane region" description="Helical; Name=1" evidence="3">
    <location>
        <begin position="368"/>
        <end position="388"/>
    </location>
</feature>
<feature type="topological domain" description="Cytoplasmic" evidence="3">
    <location>
        <begin position="389"/>
        <end position="399"/>
    </location>
</feature>
<feature type="transmembrane region" description="Helical; Name=2" evidence="3">
    <location>
        <begin position="400"/>
        <end position="422"/>
    </location>
</feature>
<feature type="topological domain" description="Extracellular" evidence="3">
    <location>
        <begin position="423"/>
        <end position="444"/>
    </location>
</feature>
<feature type="transmembrane region" description="Helical; Name=3" evidence="3">
    <location>
        <begin position="445"/>
        <end position="466"/>
    </location>
</feature>
<feature type="topological domain" description="Cytoplasmic" evidence="3">
    <location>
        <begin position="467"/>
        <end position="486"/>
    </location>
</feature>
<feature type="transmembrane region" description="Helical; Name=4" evidence="3">
    <location>
        <begin position="487"/>
        <end position="509"/>
    </location>
</feature>
<feature type="topological domain" description="Extracellular" evidence="3">
    <location>
        <begin position="510"/>
        <end position="529"/>
    </location>
</feature>
<feature type="transmembrane region" description="Helical; Name=5" evidence="3">
    <location>
        <begin position="530"/>
        <end position="551"/>
    </location>
</feature>
<feature type="topological domain" description="Cytoplasmic" evidence="3">
    <location>
        <begin position="552"/>
        <end position="574"/>
    </location>
</feature>
<feature type="transmembrane region" description="Helical; Name=6" evidence="3">
    <location>
        <begin position="575"/>
        <end position="598"/>
    </location>
</feature>
<feature type="topological domain" description="Extracellular" evidence="3">
    <location>
        <begin position="599"/>
        <end position="609"/>
    </location>
</feature>
<feature type="transmembrane region" description="Helical; Name=7" evidence="3">
    <location>
        <begin position="610"/>
        <end position="631"/>
    </location>
</feature>
<feature type="topological domain" description="Cytoplasmic" evidence="3">
    <location>
        <begin position="632"/>
        <end position="694"/>
    </location>
</feature>
<feature type="domain" description="LRRNT">
    <location>
        <begin position="18"/>
        <end position="46"/>
    </location>
</feature>
<feature type="repeat" description="LRR 1">
    <location>
        <begin position="49"/>
        <end position="72"/>
    </location>
</feature>
<feature type="repeat" description="LRR 2">
    <location>
        <begin position="73"/>
        <end position="97"/>
    </location>
</feature>
<feature type="repeat" description="LRR 3">
    <location>
        <begin position="98"/>
        <end position="118"/>
    </location>
</feature>
<feature type="repeat" description="LRR 4">
    <location>
        <begin position="119"/>
        <end position="143"/>
    </location>
</feature>
<feature type="repeat" description="LRR 5">
    <location>
        <begin position="144"/>
        <end position="169"/>
    </location>
</feature>
<feature type="repeat" description="LRR 6">
    <location>
        <begin position="170"/>
        <end position="192"/>
    </location>
</feature>
<feature type="repeat" description="LRR 7">
    <location>
        <begin position="193"/>
        <end position="216"/>
    </location>
</feature>
<feature type="repeat" description="LRR 8">
    <location>
        <begin position="217"/>
        <end position="240"/>
    </location>
</feature>
<feature type="repeat" description="LRR 9">
    <location>
        <begin position="241"/>
        <end position="259"/>
    </location>
</feature>
<feature type="modified residue" description="Sulfotyrosine" evidence="2">
    <location>
        <position position="336"/>
    </location>
</feature>
<feature type="glycosylation site" description="N-linked (GlcNAc...) asparagine" evidence="3">
    <location>
        <position position="191"/>
    </location>
</feature>
<feature type="glycosylation site" description="N-linked (GlcNAc...) asparagine" evidence="3">
    <location>
        <position position="199"/>
    </location>
</feature>
<feature type="glycosylation site" description="N-linked (GlcNAc...) asparagine" evidence="3">
    <location>
        <position position="268"/>
    </location>
</feature>
<feature type="glycosylation site" description="N-linked (GlcNAc...) asparagine" evidence="3">
    <location>
        <position position="293"/>
    </location>
</feature>
<feature type="disulfide bond" evidence="4">
    <location>
        <begin position="18"/>
        <end position="25"/>
    </location>
</feature>
<feature type="disulfide bond" evidence="4">
    <location>
        <begin position="23"/>
        <end position="32"/>
    </location>
</feature>
<feature type="disulfide bond" evidence="2">
    <location>
        <begin position="275"/>
        <end position="347"/>
    </location>
</feature>
<feature type="disulfide bond" evidence="2">
    <location>
        <begin position="276"/>
        <end position="357"/>
    </location>
</feature>
<feature type="disulfide bond" evidence="2">
    <location>
        <begin position="276"/>
        <end position="292"/>
    </location>
</feature>
<feature type="disulfide bond" evidence="2">
    <location>
        <begin position="292"/>
        <end position="339"/>
    </location>
</feature>
<feature type="disulfide bond" evidence="4">
    <location>
        <begin position="443"/>
        <end position="518"/>
    </location>
</feature>
<sequence length="694" mass="78480">MAFLWISFLVFLGSGSGCHHRICHCSDRVFICQESKVTEIPSDIPRNTVEMRFVLTKLQVIPRGAFSGFRDLEKIEISQNDALEVIEADVFSNLPKLHEIRIEKANNLVLIDPEAFWNLPNLRYLLISNTGIKHLPAVYKIQSHQKVLLDIQDNINIRTIERNSFAGLSSESEILWLNKNGIQEIQNQAFNGTQLDELNLSDNINLEDLPNGIFQGANGPVILDISRTRIHSLPSDGLKNLKKLKARSAYNFKTLPNLDKFAELVEANLTYPSHCCAFANWRRQAFELHPICNKSFVRQDSDDLAMDWGHRRRSVEEEYVSNLDKGFDITDTELDYDLCNEVVDVACSPKPDAFNPCEDIMGYNFLRVLIWFISILSITGNIVVLVILITSQYKLTVPRFLMCNLAFADLCIGIYLLLIASVDIHTKSQYHNYAIDWQTGAGCDAAGFFTVFASELSVYTLTAITLERWHTITYAMQLDRKVRLRHAASIMLIGWIFAFSVALLPIFGVSSYMKVSICLPMDIDSPLSQFYVISLLVLNVLASVIICTCYTHIYFTVRNPNIISSTSDAKIAKRMAMLIFTDFLCMAPISFFAISASVKMPLITVSKSKILLVLFYPINSCANPFLYAVFTKTFRRDFFILLSKFGCCEMQAQIYRTETSSTVHSSHPRNGQCPLMAKSNSGAVYKLVPLNHLS</sequence>
<reference key="1">
    <citation type="journal article" date="2002" name="Mol. Reprod. Dev.">
        <title>Structure and expression of the follicle-stimulating hormone receptor gene in a marsupial, Macropus eugenii.</title>
        <authorList>
            <person name="Mattiske D."/>
            <person name="Pask A.J."/>
            <person name="Shaw J.M."/>
            <person name="Shaw G."/>
        </authorList>
    </citation>
    <scope>NUCLEOTIDE SEQUENCE [MRNA]</scope>
</reference>
<organism>
    <name type="scientific">Notamacropus eugenii</name>
    <name type="common">Tammar wallaby</name>
    <name type="synonym">Macropus eugenii</name>
    <dbReference type="NCBI Taxonomy" id="9315"/>
    <lineage>
        <taxon>Eukaryota</taxon>
        <taxon>Metazoa</taxon>
        <taxon>Chordata</taxon>
        <taxon>Craniata</taxon>
        <taxon>Vertebrata</taxon>
        <taxon>Euteleostomi</taxon>
        <taxon>Mammalia</taxon>
        <taxon>Metatheria</taxon>
        <taxon>Diprotodontia</taxon>
        <taxon>Macropodidae</taxon>
        <taxon>Notamacropus</taxon>
    </lineage>
</organism>
<keyword id="KW-1003">Cell membrane</keyword>
<keyword id="KW-1015">Disulfide bond</keyword>
<keyword id="KW-0297">G-protein coupled receptor</keyword>
<keyword id="KW-0325">Glycoprotein</keyword>
<keyword id="KW-0433">Leucine-rich repeat</keyword>
<keyword id="KW-0472">Membrane</keyword>
<keyword id="KW-0675">Receptor</keyword>
<keyword id="KW-0677">Repeat</keyword>
<keyword id="KW-0732">Signal</keyword>
<keyword id="KW-0765">Sulfation</keyword>
<keyword id="KW-0807">Transducer</keyword>
<keyword id="KW-0812">Transmembrane</keyword>
<keyword id="KW-1133">Transmembrane helix</keyword>
<protein>
    <recommendedName>
        <fullName>Follicle-stimulating hormone receptor</fullName>
        <shortName>FSH-R</shortName>
    </recommendedName>
    <alternativeName>
        <fullName>Follitropin receptor</fullName>
    </alternativeName>
</protein>
<proteinExistence type="evidence at transcript level"/>
<comment type="function">
    <text evidence="2">G protein-coupled receptor for follitropin, the follicle-stimulating hormone. Through cAMP production activates the downstream PI3K-AKT and ERK1/ERK2 signaling pathways.</text>
</comment>
<comment type="subunit">
    <text evidence="1 2">Homotrimer. Functions as a homotrimer binding the FSH hormone heterodimer composed of CGA and FSHB (By similarity). Interacts with ARRB2 (By similarity). Interacts with APPL2; interaction is independent of follicle stimulating hormone stimulation (By similarity).</text>
</comment>
<comment type="subcellular location">
    <subcellularLocation>
        <location evidence="2">Cell membrane</location>
        <topology evidence="2">Multi-pass membrane protein</topology>
    </subcellularLocation>
</comment>
<comment type="PTM">
    <text evidence="1">N-glycosylated; indirectly required for FSH-binding, possibly via a conformational change that allows high affinity binding of hormone.</text>
</comment>
<comment type="PTM">
    <text evidence="2">Sulfated.</text>
</comment>
<comment type="similarity">
    <text evidence="4">Belongs to the G-protein coupled receptor 1 family. FSH/LSH/TSH subfamily.</text>
</comment>
<evidence type="ECO:0000250" key="1">
    <source>
        <dbReference type="UniProtKB" id="P20395"/>
    </source>
</evidence>
<evidence type="ECO:0000250" key="2">
    <source>
        <dbReference type="UniProtKB" id="P23945"/>
    </source>
</evidence>
<evidence type="ECO:0000255" key="3"/>
<evidence type="ECO:0000255" key="4">
    <source>
        <dbReference type="PROSITE-ProRule" id="PRU00521"/>
    </source>
</evidence>
<accession>Q6YNB6</accession>
<dbReference type="EMBL" id="AY082002">
    <property type="protein sequence ID" value="AAL99292.1"/>
    <property type="molecule type" value="mRNA"/>
</dbReference>
<dbReference type="SMR" id="Q6YNB6"/>
<dbReference type="GlyCosmos" id="Q6YNB6">
    <property type="glycosylation" value="4 sites, No reported glycans"/>
</dbReference>
<dbReference type="HOGENOM" id="CLU_006130_1_1_1"/>
<dbReference type="TreeFam" id="TF316814"/>
<dbReference type="GO" id="GO:0016020">
    <property type="term" value="C:membrane"/>
    <property type="evidence" value="ECO:0000250"/>
    <property type="project" value="UniProtKB"/>
</dbReference>
<dbReference type="GO" id="GO:0005886">
    <property type="term" value="C:plasma membrane"/>
    <property type="evidence" value="ECO:0000250"/>
    <property type="project" value="UniProtKB"/>
</dbReference>
<dbReference type="GO" id="GO:0043235">
    <property type="term" value="C:receptor complex"/>
    <property type="evidence" value="ECO:0000250"/>
    <property type="project" value="UniProtKB"/>
</dbReference>
<dbReference type="GO" id="GO:0004963">
    <property type="term" value="F:follicle-stimulating hormone receptor activity"/>
    <property type="evidence" value="ECO:0000250"/>
    <property type="project" value="UniProtKB"/>
</dbReference>
<dbReference type="GO" id="GO:0008528">
    <property type="term" value="F:G protein-coupled peptide receptor activity"/>
    <property type="evidence" value="ECO:0007669"/>
    <property type="project" value="TreeGrafter"/>
</dbReference>
<dbReference type="GO" id="GO:0007189">
    <property type="term" value="P:adenylate cyclase-activating G protein-coupled receptor signaling pathway"/>
    <property type="evidence" value="ECO:0007669"/>
    <property type="project" value="TreeGrafter"/>
</dbReference>
<dbReference type="GO" id="GO:0071372">
    <property type="term" value="P:cellular response to follicle-stimulating hormone stimulus"/>
    <property type="evidence" value="ECO:0000250"/>
    <property type="project" value="UniProtKB"/>
</dbReference>
<dbReference type="GO" id="GO:0042699">
    <property type="term" value="P:follicle-stimulating hormone signaling pathway"/>
    <property type="evidence" value="ECO:0000250"/>
    <property type="project" value="UniProtKB"/>
</dbReference>
<dbReference type="GO" id="GO:0007186">
    <property type="term" value="P:G protein-coupled receptor signaling pathway"/>
    <property type="evidence" value="ECO:0000250"/>
    <property type="project" value="UniProtKB"/>
</dbReference>
<dbReference type="GO" id="GO:0009755">
    <property type="term" value="P:hormone-mediated signaling pathway"/>
    <property type="evidence" value="ECO:0007669"/>
    <property type="project" value="TreeGrafter"/>
</dbReference>
<dbReference type="GO" id="GO:0008584">
    <property type="term" value="P:male gonad development"/>
    <property type="evidence" value="ECO:0007669"/>
    <property type="project" value="TreeGrafter"/>
</dbReference>
<dbReference type="GO" id="GO:0070374">
    <property type="term" value="P:positive regulation of ERK1 and ERK2 cascade"/>
    <property type="evidence" value="ECO:0000250"/>
    <property type="project" value="UniProtKB"/>
</dbReference>
<dbReference type="GO" id="GO:0051897">
    <property type="term" value="P:positive regulation of phosphatidylinositol 3-kinase/protein kinase B signal transduction"/>
    <property type="evidence" value="ECO:0000250"/>
    <property type="project" value="UniProtKB"/>
</dbReference>
<dbReference type="GO" id="GO:0010738">
    <property type="term" value="P:regulation of protein kinase A signaling"/>
    <property type="evidence" value="ECO:0000250"/>
    <property type="project" value="UniProtKB"/>
</dbReference>
<dbReference type="CDD" id="cd15360">
    <property type="entry name" value="7tmA_FSH-R"/>
    <property type="match status" value="1"/>
</dbReference>
<dbReference type="FunFam" id="1.20.1070.10:FF:000019">
    <property type="entry name" value="Lutropin-choriogonadotropic hormone receptor"/>
    <property type="match status" value="1"/>
</dbReference>
<dbReference type="Gene3D" id="1.20.1070.10">
    <property type="entry name" value="Rhodopsin 7-helix transmembrane proteins"/>
    <property type="match status" value="1"/>
</dbReference>
<dbReference type="Gene3D" id="3.80.10.10">
    <property type="entry name" value="Ribonuclease Inhibitor"/>
    <property type="match status" value="1"/>
</dbReference>
<dbReference type="InterPro" id="IPR002272">
    <property type="entry name" value="FSH_rcpt"/>
</dbReference>
<dbReference type="InterPro" id="IPR024635">
    <property type="entry name" value="GnHR_TM"/>
</dbReference>
<dbReference type="InterPro" id="IPR000276">
    <property type="entry name" value="GPCR_Rhodpsn"/>
</dbReference>
<dbReference type="InterPro" id="IPR017452">
    <property type="entry name" value="GPCR_Rhodpsn_7TM"/>
</dbReference>
<dbReference type="InterPro" id="IPR002131">
    <property type="entry name" value="Gphrmn_rcpt_fam"/>
</dbReference>
<dbReference type="InterPro" id="IPR001611">
    <property type="entry name" value="Leu-rich_rpt"/>
</dbReference>
<dbReference type="InterPro" id="IPR026906">
    <property type="entry name" value="LRR_5"/>
</dbReference>
<dbReference type="InterPro" id="IPR032675">
    <property type="entry name" value="LRR_dom_sf"/>
</dbReference>
<dbReference type="InterPro" id="IPR000372">
    <property type="entry name" value="LRRNT"/>
</dbReference>
<dbReference type="PANTHER" id="PTHR24372:SF5">
    <property type="entry name" value="FOLLICLE-STIMULATING HORMONE RECEPTOR"/>
    <property type="match status" value="1"/>
</dbReference>
<dbReference type="PANTHER" id="PTHR24372">
    <property type="entry name" value="GLYCOPROTEIN HORMONE RECEPTOR"/>
    <property type="match status" value="1"/>
</dbReference>
<dbReference type="Pfam" id="PF00001">
    <property type="entry name" value="7tm_1"/>
    <property type="match status" value="1"/>
</dbReference>
<dbReference type="Pfam" id="PF12369">
    <property type="entry name" value="GnHR_trans"/>
    <property type="match status" value="1"/>
</dbReference>
<dbReference type="Pfam" id="PF13306">
    <property type="entry name" value="LRR_5"/>
    <property type="match status" value="1"/>
</dbReference>
<dbReference type="Pfam" id="PF13855">
    <property type="entry name" value="LRR_8"/>
    <property type="match status" value="1"/>
</dbReference>
<dbReference type="Pfam" id="PF01462">
    <property type="entry name" value="LRRNT"/>
    <property type="match status" value="1"/>
</dbReference>
<dbReference type="PRINTS" id="PR01143">
    <property type="entry name" value="FSHRECEPTOR"/>
</dbReference>
<dbReference type="PRINTS" id="PR00373">
    <property type="entry name" value="GLYCHORMONER"/>
</dbReference>
<dbReference type="PRINTS" id="PR00237">
    <property type="entry name" value="GPCRRHODOPSN"/>
</dbReference>
<dbReference type="SMART" id="SM00013">
    <property type="entry name" value="LRRNT"/>
    <property type="match status" value="1"/>
</dbReference>
<dbReference type="SUPFAM" id="SSF81321">
    <property type="entry name" value="Family A G protein-coupled receptor-like"/>
    <property type="match status" value="1"/>
</dbReference>
<dbReference type="SUPFAM" id="SSF52058">
    <property type="entry name" value="L domain-like"/>
    <property type="match status" value="1"/>
</dbReference>
<dbReference type="PROSITE" id="PS00237">
    <property type="entry name" value="G_PROTEIN_RECEP_F1_1"/>
    <property type="match status" value="1"/>
</dbReference>
<dbReference type="PROSITE" id="PS50262">
    <property type="entry name" value="G_PROTEIN_RECEP_F1_2"/>
    <property type="match status" value="1"/>
</dbReference>
<name>FSHR_NOTEU</name>